<proteinExistence type="evidence at protein level"/>
<gene>
    <name type="primary">Znf503</name>
    <name type="synonym">Nolz1</name>
    <name type="synonym">Zfp503</name>
</gene>
<keyword id="KW-0007">Acetylation</keyword>
<keyword id="KW-0025">Alternative splicing</keyword>
<keyword id="KW-0479">Metal-binding</keyword>
<keyword id="KW-0488">Methylation</keyword>
<keyword id="KW-0539">Nucleus</keyword>
<keyword id="KW-0597">Phosphoprotein</keyword>
<keyword id="KW-1185">Reference proteome</keyword>
<keyword id="KW-0678">Repressor</keyword>
<keyword id="KW-0804">Transcription</keyword>
<keyword id="KW-0805">Transcription regulation</keyword>
<keyword id="KW-0862">Zinc</keyword>
<keyword id="KW-0863">Zinc-finger</keyword>
<name>ZN503_MOUSE</name>
<dbReference type="EMBL" id="AY281290">
    <property type="protein sequence ID" value="AAP44411.1"/>
    <property type="molecule type" value="mRNA"/>
</dbReference>
<dbReference type="EMBL" id="AY281291">
    <property type="protein sequence ID" value="AAP44412.1"/>
    <property type="molecule type" value="mRNA"/>
</dbReference>
<dbReference type="EMBL" id="BC018484">
    <property type="protein sequence ID" value="AAH18484.1"/>
    <property type="molecule type" value="mRNA"/>
</dbReference>
<dbReference type="EMBL" id="BC058952">
    <property type="protein sequence ID" value="AAH58952.1"/>
    <property type="molecule type" value="mRNA"/>
</dbReference>
<dbReference type="EMBL" id="BC066027">
    <property type="protein sequence ID" value="AAH66027.1"/>
    <property type="molecule type" value="mRNA"/>
</dbReference>
<dbReference type="CCDS" id="CCDS36822.1">
    <molecule id="Q7TMA2-1"/>
</dbReference>
<dbReference type="RefSeq" id="NP_663434.2">
    <molecule id="Q7TMA2-1"/>
    <property type="nucleotide sequence ID" value="NM_145459.3"/>
</dbReference>
<dbReference type="CORUM" id="Q7TMA2"/>
<dbReference type="FunCoup" id="Q7TMA2">
    <property type="interactions" value="1290"/>
</dbReference>
<dbReference type="STRING" id="10090.ENSMUSP00000046641"/>
<dbReference type="GlyGen" id="Q7TMA2">
    <property type="glycosylation" value="3 sites, 1 O-linked glycan (1 site)"/>
</dbReference>
<dbReference type="iPTMnet" id="Q7TMA2"/>
<dbReference type="PhosphoSitePlus" id="Q7TMA2"/>
<dbReference type="PaxDb" id="10090-ENSMUSP00000046641"/>
<dbReference type="PeptideAtlas" id="Q7TMA2"/>
<dbReference type="ProteomicsDB" id="275080">
    <molecule id="Q7TMA2-1"/>
</dbReference>
<dbReference type="ProteomicsDB" id="275081">
    <molecule id="Q7TMA2-2"/>
</dbReference>
<dbReference type="Pumba" id="Q7TMA2"/>
<dbReference type="Antibodypedia" id="29703">
    <property type="antibodies" value="147 antibodies from 21 providers"/>
</dbReference>
<dbReference type="DNASU" id="218820"/>
<dbReference type="Ensembl" id="ENSMUST00000043409.9">
    <molecule id="Q7TMA2-1"/>
    <property type="protein sequence ID" value="ENSMUSP00000046641.8"/>
    <property type="gene ID" value="ENSMUSG00000039081.11"/>
</dbReference>
<dbReference type="GeneID" id="218820"/>
<dbReference type="KEGG" id="mmu:218820"/>
<dbReference type="UCSC" id="uc007slv.1">
    <molecule id="Q7TMA2-1"/>
    <property type="organism name" value="mouse"/>
</dbReference>
<dbReference type="AGR" id="MGI:1353644"/>
<dbReference type="CTD" id="218820"/>
<dbReference type="MGI" id="MGI:1353644">
    <property type="gene designation" value="Zfp503"/>
</dbReference>
<dbReference type="VEuPathDB" id="HostDB:ENSMUSG00000039081"/>
<dbReference type="eggNOG" id="ENOG502QUYV">
    <property type="taxonomic scope" value="Eukaryota"/>
</dbReference>
<dbReference type="GeneTree" id="ENSGT00390000014618"/>
<dbReference type="HOGENOM" id="CLU_035082_1_0_1"/>
<dbReference type="InParanoid" id="Q7TMA2"/>
<dbReference type="OMA" id="SDICVAW"/>
<dbReference type="OrthoDB" id="10054079at2759"/>
<dbReference type="PhylomeDB" id="Q7TMA2"/>
<dbReference type="TreeFam" id="TF324968"/>
<dbReference type="BioGRID-ORCS" id="218820">
    <property type="hits" value="4 hits in 74 CRISPR screens"/>
</dbReference>
<dbReference type="ChiTaRS" id="Zfp503">
    <property type="organism name" value="mouse"/>
</dbReference>
<dbReference type="PRO" id="PR:Q7TMA2"/>
<dbReference type="Proteomes" id="UP000000589">
    <property type="component" value="Chromosome 14"/>
</dbReference>
<dbReference type="RNAct" id="Q7TMA2">
    <property type="molecule type" value="protein"/>
</dbReference>
<dbReference type="Bgee" id="ENSMUSG00000039081">
    <property type="expression patterns" value="Expressed in indifferent gonad and 291 other cell types or tissues"/>
</dbReference>
<dbReference type="GO" id="GO:0005634">
    <property type="term" value="C:nucleus"/>
    <property type="evidence" value="ECO:0007669"/>
    <property type="project" value="UniProtKB-SubCell"/>
</dbReference>
<dbReference type="GO" id="GO:0008270">
    <property type="term" value="F:zinc ion binding"/>
    <property type="evidence" value="ECO:0007669"/>
    <property type="project" value="UniProtKB-KW"/>
</dbReference>
<dbReference type="GO" id="GO:0070315">
    <property type="term" value="P:G1 to G0 transition involved in cell differentiation"/>
    <property type="evidence" value="ECO:0000315"/>
    <property type="project" value="UniProtKB"/>
</dbReference>
<dbReference type="GO" id="GO:0008285">
    <property type="term" value="P:negative regulation of cell population proliferation"/>
    <property type="evidence" value="ECO:0007669"/>
    <property type="project" value="Ensembl"/>
</dbReference>
<dbReference type="GO" id="GO:0010629">
    <property type="term" value="P:negative regulation of gene expression"/>
    <property type="evidence" value="ECO:0007669"/>
    <property type="project" value="Ensembl"/>
</dbReference>
<dbReference type="GO" id="GO:0061351">
    <property type="term" value="P:neural precursor cell proliferation"/>
    <property type="evidence" value="ECO:0000315"/>
    <property type="project" value="UniProtKB"/>
</dbReference>
<dbReference type="FunFam" id="3.30.160.60:FF:000129">
    <property type="entry name" value="Zinc finger protein 503"/>
    <property type="match status" value="1"/>
</dbReference>
<dbReference type="Gene3D" id="3.30.160.60">
    <property type="entry name" value="Classic Zinc Finger"/>
    <property type="match status" value="1"/>
</dbReference>
<dbReference type="InterPro" id="IPR051520">
    <property type="entry name" value="Elbow/Noc_ZnFinger"/>
</dbReference>
<dbReference type="InterPro" id="IPR022129">
    <property type="entry name" value="Tscrpt_rep_NocA-like"/>
</dbReference>
<dbReference type="InterPro" id="IPR013087">
    <property type="entry name" value="Znf_C2H2_type"/>
</dbReference>
<dbReference type="PANTHER" id="PTHR12522:SF3">
    <property type="entry name" value="ZINC FINGER PROTEIN 503"/>
    <property type="match status" value="1"/>
</dbReference>
<dbReference type="PANTHER" id="PTHR12522">
    <property type="entry name" value="ZINC-FINGER PROTEIN NOLZ1-RELATED"/>
    <property type="match status" value="1"/>
</dbReference>
<dbReference type="Pfam" id="PF12402">
    <property type="entry name" value="nlz1"/>
    <property type="match status" value="1"/>
</dbReference>
<dbReference type="PROSITE" id="PS50157">
    <property type="entry name" value="ZINC_FINGER_C2H2_2"/>
    <property type="match status" value="1"/>
</dbReference>
<reference key="1">
    <citation type="journal article" date="2004" name="Proc. Natl. Acad. Sci. U.S.A.">
        <title>Identification of a developmentally regulated striatum-enriched zinc-finger gene, Nolz-1, in the mammalian brain.</title>
        <authorList>
            <person name="Chang C.W."/>
            <person name="Tsai C.W."/>
            <person name="Wang H.F."/>
            <person name="Tsai H.C."/>
            <person name="Chen H.Y."/>
            <person name="Tsai T.F."/>
            <person name="Takahashi H."/>
            <person name="Li H.Y."/>
            <person name="Fann M.J."/>
            <person name="Yang C.W."/>
            <person name="Hayashizaki Y."/>
            <person name="Saito T."/>
            <person name="Liu F.C."/>
        </authorList>
    </citation>
    <scope>NUCLEOTIDE SEQUENCE [MRNA] (ISOFORM 1)</scope>
    <source>
        <strain>C57BL/6J</strain>
        <tissue>Head</tissue>
        <tissue>Medulla oblongata</tissue>
    </source>
</reference>
<reference key="2">
    <citation type="journal article" date="2004" name="Genome Res.">
        <title>The status, quality, and expansion of the NIH full-length cDNA project: the Mammalian Gene Collection (MGC).</title>
        <authorList>
            <consortium name="The MGC Project Team"/>
        </authorList>
    </citation>
    <scope>NUCLEOTIDE SEQUENCE [LARGE SCALE MRNA] (ISOFORMS 1 AND 2)</scope>
    <source>
        <strain>C57BL/6J</strain>
        <strain>FVB/N</strain>
        <tissue>Brain</tissue>
        <tissue>Mammary tumor</tissue>
    </source>
</reference>
<reference key="3">
    <citation type="journal article" date="2010" name="Cell">
        <title>A tissue-specific atlas of mouse protein phosphorylation and expression.</title>
        <authorList>
            <person name="Huttlin E.L."/>
            <person name="Jedrychowski M.P."/>
            <person name="Elias J.E."/>
            <person name="Goswami T."/>
            <person name="Rad R."/>
            <person name="Beausoleil S.A."/>
            <person name="Villen J."/>
            <person name="Haas W."/>
            <person name="Sowa M.E."/>
            <person name="Gygi S.P."/>
        </authorList>
    </citation>
    <scope>PHOSPHORYLATION [LARGE SCALE ANALYSIS] AT SER-107; SER-235 AND SER-241</scope>
    <scope>IDENTIFICATION BY MASS SPECTROMETRY [LARGE SCALE ANALYSIS]</scope>
    <source>
        <tissue>Kidney</tissue>
    </source>
</reference>
<reference key="4">
    <citation type="journal article" date="2013" name="Mol. Cell">
        <title>SIRT5-mediated lysine desuccinylation impacts diverse metabolic pathways.</title>
        <authorList>
            <person name="Park J."/>
            <person name="Chen Y."/>
            <person name="Tishkoff D.X."/>
            <person name="Peng C."/>
            <person name="Tan M."/>
            <person name="Dai L."/>
            <person name="Xie Z."/>
            <person name="Zhang Y."/>
            <person name="Zwaans B.M."/>
            <person name="Skinner M.E."/>
            <person name="Lombard D.B."/>
            <person name="Zhao Y."/>
        </authorList>
    </citation>
    <scope>ACETYLATION [LARGE SCALE ANALYSIS] AT LYS-213</scope>
    <scope>IDENTIFICATION BY MASS SPECTROMETRY [LARGE SCALE ANALYSIS]</scope>
    <source>
        <tissue>Embryonic fibroblast</tissue>
    </source>
</reference>
<reference key="5">
    <citation type="journal article" date="2014" name="Mol. Cell. Proteomics">
        <title>Immunoaffinity enrichment and mass spectrometry analysis of protein methylation.</title>
        <authorList>
            <person name="Guo A."/>
            <person name="Gu H."/>
            <person name="Zhou J."/>
            <person name="Mulhern D."/>
            <person name="Wang Y."/>
            <person name="Lee K.A."/>
            <person name="Yang V."/>
            <person name="Aguiar M."/>
            <person name="Kornhauser J."/>
            <person name="Jia X."/>
            <person name="Ren J."/>
            <person name="Beausoleil S.A."/>
            <person name="Silva J.C."/>
            <person name="Vemulapalli V."/>
            <person name="Bedford M.T."/>
            <person name="Comb M.J."/>
        </authorList>
    </citation>
    <scope>METHYLATION [LARGE SCALE ANALYSIS] AT ARG-642</scope>
    <scope>IDENTIFICATION BY MASS SPECTROMETRY [LARGE SCALE ANALYSIS]</scope>
    <source>
        <tissue>Embryo</tissue>
    </source>
</reference>
<comment type="function">
    <text evidence="1">May function as a transcriptional repressor.</text>
</comment>
<comment type="subcellular location">
    <subcellularLocation>
        <location evidence="1">Nucleus</location>
    </subcellularLocation>
</comment>
<comment type="alternative products">
    <event type="alternative splicing"/>
    <isoform>
        <id>Q7TMA2-1</id>
        <name>1</name>
        <sequence type="displayed"/>
    </isoform>
    <isoform>
        <id>Q7TMA2-2</id>
        <name>2</name>
        <sequence type="described" ref="VSP_026396 VSP_026397 VSP_026398"/>
    </isoform>
</comment>
<comment type="similarity">
    <text evidence="5">Belongs to the Elbow/Noc family.</text>
</comment>
<feature type="chain" id="PRO_0000292205" description="Zinc finger protein 503">
    <location>
        <begin position="1"/>
        <end position="652"/>
    </location>
</feature>
<feature type="zinc finger region" description="C2H2-type" evidence="2">
    <location>
        <begin position="520"/>
        <end position="548"/>
    </location>
</feature>
<feature type="region of interest" description="Disordered" evidence="3">
    <location>
        <begin position="1"/>
        <end position="72"/>
    </location>
</feature>
<feature type="region of interest" description="Disordered" evidence="3">
    <location>
        <begin position="126"/>
        <end position="283"/>
    </location>
</feature>
<feature type="region of interest" description="Disordered" evidence="3">
    <location>
        <begin position="296"/>
        <end position="338"/>
    </location>
</feature>
<feature type="compositionally biased region" description="Polar residues" evidence="3">
    <location>
        <begin position="1"/>
        <end position="11"/>
    </location>
</feature>
<feature type="compositionally biased region" description="Gly residues" evidence="3">
    <location>
        <begin position="16"/>
        <end position="32"/>
    </location>
</feature>
<feature type="compositionally biased region" description="Low complexity" evidence="3">
    <location>
        <begin position="135"/>
        <end position="144"/>
    </location>
</feature>
<feature type="compositionally biased region" description="Gly residues" evidence="3">
    <location>
        <begin position="145"/>
        <end position="157"/>
    </location>
</feature>
<feature type="compositionally biased region" description="Gly residues" evidence="3">
    <location>
        <begin position="194"/>
        <end position="209"/>
    </location>
</feature>
<feature type="compositionally biased region" description="Polar residues" evidence="3">
    <location>
        <begin position="221"/>
        <end position="230"/>
    </location>
</feature>
<feature type="compositionally biased region" description="Low complexity" evidence="3">
    <location>
        <begin position="231"/>
        <end position="244"/>
    </location>
</feature>
<feature type="compositionally biased region" description="Basic and acidic residues" evidence="3">
    <location>
        <begin position="254"/>
        <end position="263"/>
    </location>
</feature>
<feature type="compositionally biased region" description="Gly residues" evidence="3">
    <location>
        <begin position="264"/>
        <end position="283"/>
    </location>
</feature>
<feature type="compositionally biased region" description="Low complexity" evidence="3">
    <location>
        <begin position="314"/>
        <end position="336"/>
    </location>
</feature>
<feature type="modified residue" description="Phosphoserine" evidence="6">
    <location>
        <position position="107"/>
    </location>
</feature>
<feature type="modified residue" description="N6-acetyllysine" evidence="7">
    <location>
        <position position="213"/>
    </location>
</feature>
<feature type="modified residue" description="Phosphoserine" evidence="6">
    <location>
        <position position="235"/>
    </location>
</feature>
<feature type="modified residue" description="Phosphoserine" evidence="6">
    <location>
        <position position="241"/>
    </location>
</feature>
<feature type="modified residue" description="Omega-N-methylarginine" evidence="8">
    <location>
        <position position="642"/>
    </location>
</feature>
<feature type="splice variant" id="VSP_026396" description="In isoform 2." evidence="4">
    <location>
        <begin position="17"/>
        <end position="21"/>
    </location>
</feature>
<feature type="splice variant" id="VSP_026397" description="In isoform 2." evidence="4">
    <original>SKGSGGASADGVPAGLGHGRISCGGGINVDVNQHSEGGPGGKALGSDCGGSSSSSSGSGPSAPTSSSVLGSGLVAPVSPYKPGQTVFPLPPAGMTYPGSLAGA</original>
    <variation>AGACRHRTILLPLCPLRTETDHCLRTGVSVRAAQRNLERGRIWGMGGAREGQDPSEVPDTRRGRRPGLRKGKESLNLTYPPNHRDRESLDAKLLLHPYSPNQTL</variation>
    <location>
        <begin position="270"/>
        <end position="372"/>
    </location>
</feature>
<feature type="splice variant" id="VSP_026398" description="In isoform 2." evidence="4">
    <location>
        <begin position="373"/>
        <end position="652"/>
    </location>
</feature>
<evidence type="ECO:0000250" key="1"/>
<evidence type="ECO:0000255" key="2">
    <source>
        <dbReference type="PROSITE-ProRule" id="PRU00042"/>
    </source>
</evidence>
<evidence type="ECO:0000256" key="3">
    <source>
        <dbReference type="SAM" id="MobiDB-lite"/>
    </source>
</evidence>
<evidence type="ECO:0000303" key="4">
    <source>
    </source>
</evidence>
<evidence type="ECO:0000305" key="5"/>
<evidence type="ECO:0007744" key="6">
    <source>
    </source>
</evidence>
<evidence type="ECO:0007744" key="7">
    <source>
    </source>
</evidence>
<evidence type="ECO:0007744" key="8">
    <source>
    </source>
</evidence>
<accession>Q7TMA2</accession>
<accession>Q8VCV4</accession>
<protein>
    <recommendedName>
        <fullName>Zinc finger protein 503</fullName>
    </recommendedName>
    <alternativeName>
        <fullName>Zinc finger protein Nolz-1</fullName>
    </alternativeName>
</protein>
<sequence length="652" mass="63036">MSTAPSLSALRSSKHSGGGGGGGGGGGSGGGSADPAWTSALSGNCSGHGPGSSPAGSTKPFVHAVPPSDPLRQANRLPIKVLKMLTARTGHILHPEYLQPLPSTPVSPIELDAKKSPLALLAQTCSQIGKPDPSPSSKLSSVASNGGGAGGAGNGAGGDKDAKSGPLKLSDIGVEDKSSFKPYSKPGSDKKEPGGGGGGGGGGGGGGGVAAEKSGFRVPSATCQPFTPRTGSPSSSASACSPGGMLPSAGGGPEGKDDKKDPEAGGGGSSKGSGGASADGVPAGLGHGRISCGGGINVDVNQHSEGGPGGKALGSDCGGSSSSSSGSGPSAPTSSSVLGSGLVAPVSPYKPGQTVFPLPPAGMTYPGSLAGAYAGYPPQFLPHGVALDPTKPGSLVGAQLAAAAAGSLGCSKPAGSSPLAGASPPSVMTASLCRDPYCLSYHCASHLAGAAAASASCAHDPAAAAAALKSGYPLVYPTHPLHGVHSSLTAAAAAGATPPSLAGHPLYPYGFMLPNDPLPHICNWVSANGPCDKRFATSEELLSHLRTHTAFPGTDKLLSGYPSSSSLASAAAAAMACHMHIPTSGAPGSPGTLALRSPHHALGLSSRYHPYSKSPLPTPGAPVPVPAATGPYYSPYALYGQRLTTASALGYQ</sequence>
<organism>
    <name type="scientific">Mus musculus</name>
    <name type="common">Mouse</name>
    <dbReference type="NCBI Taxonomy" id="10090"/>
    <lineage>
        <taxon>Eukaryota</taxon>
        <taxon>Metazoa</taxon>
        <taxon>Chordata</taxon>
        <taxon>Craniata</taxon>
        <taxon>Vertebrata</taxon>
        <taxon>Euteleostomi</taxon>
        <taxon>Mammalia</taxon>
        <taxon>Eutheria</taxon>
        <taxon>Euarchontoglires</taxon>
        <taxon>Glires</taxon>
        <taxon>Rodentia</taxon>
        <taxon>Myomorpha</taxon>
        <taxon>Muroidea</taxon>
        <taxon>Muridae</taxon>
        <taxon>Murinae</taxon>
        <taxon>Mus</taxon>
        <taxon>Mus</taxon>
    </lineage>
</organism>